<evidence type="ECO:0000255" key="1">
    <source>
        <dbReference type="HAMAP-Rule" id="MF_01358"/>
    </source>
</evidence>
<comment type="function">
    <text evidence="1">NDH shuttles electrons from NAD(P)H:plastoquinone, via FMN and iron-sulfur (Fe-S) centers, to quinones in the photosynthetic chain and possibly in a chloroplast respiratory chain. The immediate electron acceptor for the enzyme in this species is believed to be plastoquinone. Couples the redox reaction to proton translocation, and thus conserves the redox energy in a proton gradient.</text>
</comment>
<comment type="catalytic activity">
    <reaction evidence="1">
        <text>a plastoquinone + NADH + (n+1) H(+)(in) = a plastoquinol + NAD(+) + n H(+)(out)</text>
        <dbReference type="Rhea" id="RHEA:42608"/>
        <dbReference type="Rhea" id="RHEA-COMP:9561"/>
        <dbReference type="Rhea" id="RHEA-COMP:9562"/>
        <dbReference type="ChEBI" id="CHEBI:15378"/>
        <dbReference type="ChEBI" id="CHEBI:17757"/>
        <dbReference type="ChEBI" id="CHEBI:57540"/>
        <dbReference type="ChEBI" id="CHEBI:57945"/>
        <dbReference type="ChEBI" id="CHEBI:62192"/>
    </reaction>
</comment>
<comment type="catalytic activity">
    <reaction evidence="1">
        <text>a plastoquinone + NADPH + (n+1) H(+)(in) = a plastoquinol + NADP(+) + n H(+)(out)</text>
        <dbReference type="Rhea" id="RHEA:42612"/>
        <dbReference type="Rhea" id="RHEA-COMP:9561"/>
        <dbReference type="Rhea" id="RHEA-COMP:9562"/>
        <dbReference type="ChEBI" id="CHEBI:15378"/>
        <dbReference type="ChEBI" id="CHEBI:17757"/>
        <dbReference type="ChEBI" id="CHEBI:57783"/>
        <dbReference type="ChEBI" id="CHEBI:58349"/>
        <dbReference type="ChEBI" id="CHEBI:62192"/>
    </reaction>
</comment>
<comment type="subunit">
    <text evidence="1">NDH is composed of at least 16 different subunits, 5 of which are encoded in the nucleus.</text>
</comment>
<comment type="subcellular location">
    <subcellularLocation>
        <location evidence="1">Plastid</location>
        <location evidence="1">Chloroplast thylakoid membrane</location>
        <topology evidence="1">Peripheral membrane protein</topology>
        <orientation evidence="1">Stromal side</orientation>
    </subcellularLocation>
</comment>
<comment type="similarity">
    <text evidence="1">Belongs to the complex I 49 kDa subunit family.</text>
</comment>
<gene>
    <name evidence="1" type="primary">ndhH</name>
    <name type="ordered locus">GuabCp071</name>
</gene>
<organism>
    <name type="scientific">Guizotia abyssinica</name>
    <name type="common">Niger</name>
    <name type="synonym">Ramtilla</name>
    <dbReference type="NCBI Taxonomy" id="4230"/>
    <lineage>
        <taxon>Eukaryota</taxon>
        <taxon>Viridiplantae</taxon>
        <taxon>Streptophyta</taxon>
        <taxon>Embryophyta</taxon>
        <taxon>Tracheophyta</taxon>
        <taxon>Spermatophyta</taxon>
        <taxon>Magnoliopsida</taxon>
        <taxon>eudicotyledons</taxon>
        <taxon>Gunneridae</taxon>
        <taxon>Pentapetalae</taxon>
        <taxon>asterids</taxon>
        <taxon>campanulids</taxon>
        <taxon>Asterales</taxon>
        <taxon>Asteraceae</taxon>
        <taxon>Asteroideae</taxon>
        <taxon>Heliantheae alliance</taxon>
        <taxon>Millerieae</taxon>
        <taxon>Guizotia</taxon>
    </lineage>
</organism>
<geneLocation type="chloroplast"/>
<protein>
    <recommendedName>
        <fullName evidence="1">NAD(P)H-quinone oxidoreductase subunit H, chloroplastic</fullName>
        <ecNumber evidence="1">7.1.1.-</ecNumber>
    </recommendedName>
    <alternativeName>
        <fullName>NAD(P)H dehydrogenase subunit H</fullName>
    </alternativeName>
    <alternativeName>
        <fullName evidence="1">NADH-plastoquinone oxidoreductase 49 kDa subunit</fullName>
    </alternativeName>
    <alternativeName>
        <fullName evidence="1">NADH-plastoquinone oxidoreductase subunit H</fullName>
    </alternativeName>
</protein>
<reference key="1">
    <citation type="submission" date="2008-03" db="EMBL/GenBank/DDBJ databases">
        <title>Guizotia abyssinica chloroplast sequenced using Solexa.</title>
        <authorList>
            <person name="Kane N.C."/>
            <person name="Dempewolf H."/>
            <person name="Stewart M.L."/>
            <person name="Cronk Q."/>
            <person name="Rieseberrg L.H."/>
        </authorList>
    </citation>
    <scope>NUCLEOTIDE SEQUENCE [LARGE SCALE GENOMIC DNA]</scope>
    <source>
        <strain>cv. PI 508077</strain>
    </source>
</reference>
<proteinExistence type="inferred from homology"/>
<name>NDHH_GUIAB</name>
<sequence>MTVPSTRKDLMIVNMGPHHPSMHGVLRLIVTLDGEDVIDCEPILGYLHRGMEKIAENRTIIQYLPYVTRWDYLATMFTEAITVNAPEQLGNIQVPKRASYIRVIMLELSRIASHLLWLGPFMADIGAQTPFFYIFRERELIYDLFEAATGMRMMHNFFRIGGVAADLPHGWIDKCLDFCDYFLTGIAEYQKLITRNPIFLERVEGVGIIGGEEAINWGLSGPMLRASGIQWDLRKVDHYECYDEFDWEVQWQKEGDSLARYLVRISEMTESIKIIQQALEGIPGGPYENLEIRRFDRVKDTVWNEFDYRFISKKPSPTFELSKQELYARVEAPKGELGIFLIGDKGVFPWRYKIRPPGFINLQILPQLVKRMKLADIMTILGSIDIIMGEVDR</sequence>
<accession>B2LMP2</accession>
<feature type="chain" id="PRO_0000357992" description="NAD(P)H-quinone oxidoreductase subunit H, chloroplastic">
    <location>
        <begin position="1"/>
        <end position="393"/>
    </location>
</feature>
<dbReference type="EC" id="7.1.1.-" evidence="1"/>
<dbReference type="EMBL" id="EU549769">
    <property type="protein sequence ID" value="ACB86575.1"/>
    <property type="molecule type" value="Genomic_DNA"/>
</dbReference>
<dbReference type="RefSeq" id="YP_001837409.1">
    <property type="nucleotide sequence ID" value="NC_010601.1"/>
</dbReference>
<dbReference type="SMR" id="B2LMP2"/>
<dbReference type="GeneID" id="6219195"/>
<dbReference type="GO" id="GO:0009535">
    <property type="term" value="C:chloroplast thylakoid membrane"/>
    <property type="evidence" value="ECO:0007669"/>
    <property type="project" value="UniProtKB-SubCell"/>
</dbReference>
<dbReference type="GO" id="GO:0051287">
    <property type="term" value="F:NAD binding"/>
    <property type="evidence" value="ECO:0007669"/>
    <property type="project" value="InterPro"/>
</dbReference>
<dbReference type="GO" id="GO:0016655">
    <property type="term" value="F:oxidoreductase activity, acting on NAD(P)H, quinone or similar compound as acceptor"/>
    <property type="evidence" value="ECO:0007669"/>
    <property type="project" value="UniProtKB-UniRule"/>
</dbReference>
<dbReference type="GO" id="GO:0048038">
    <property type="term" value="F:quinone binding"/>
    <property type="evidence" value="ECO:0007669"/>
    <property type="project" value="UniProtKB-KW"/>
</dbReference>
<dbReference type="GO" id="GO:0019684">
    <property type="term" value="P:photosynthesis, light reaction"/>
    <property type="evidence" value="ECO:0007669"/>
    <property type="project" value="UniProtKB-UniRule"/>
</dbReference>
<dbReference type="FunFam" id="1.10.645.10:FF:000003">
    <property type="entry name" value="NAD(P)H-quinone oxidoreductase subunit H, chloroplastic"/>
    <property type="match status" value="1"/>
</dbReference>
<dbReference type="Gene3D" id="1.10.645.10">
    <property type="entry name" value="Cytochrome-c3 Hydrogenase, chain B"/>
    <property type="match status" value="1"/>
</dbReference>
<dbReference type="HAMAP" id="MF_01358">
    <property type="entry name" value="NDH1_NuoD"/>
    <property type="match status" value="1"/>
</dbReference>
<dbReference type="InterPro" id="IPR001135">
    <property type="entry name" value="NADH_Q_OxRdtase_suD"/>
</dbReference>
<dbReference type="InterPro" id="IPR014029">
    <property type="entry name" value="NADH_UbQ_OxRdtase_49kDa_CS"/>
</dbReference>
<dbReference type="InterPro" id="IPR022885">
    <property type="entry name" value="NDH1_su_D/H"/>
</dbReference>
<dbReference type="InterPro" id="IPR029014">
    <property type="entry name" value="NiFe-Hase_large"/>
</dbReference>
<dbReference type="NCBIfam" id="NF004739">
    <property type="entry name" value="PRK06075.1"/>
    <property type="match status" value="1"/>
</dbReference>
<dbReference type="NCBIfam" id="NF005649">
    <property type="entry name" value="PRK07415.1"/>
    <property type="match status" value="1"/>
</dbReference>
<dbReference type="PANTHER" id="PTHR11993:SF10">
    <property type="entry name" value="NADH DEHYDROGENASE [UBIQUINONE] IRON-SULFUR PROTEIN 2, MITOCHONDRIAL"/>
    <property type="match status" value="1"/>
</dbReference>
<dbReference type="PANTHER" id="PTHR11993">
    <property type="entry name" value="NADH-UBIQUINONE OXIDOREDUCTASE 49 KDA SUBUNIT"/>
    <property type="match status" value="1"/>
</dbReference>
<dbReference type="Pfam" id="PF00346">
    <property type="entry name" value="Complex1_49kDa"/>
    <property type="match status" value="1"/>
</dbReference>
<dbReference type="SUPFAM" id="SSF56762">
    <property type="entry name" value="HydB/Nqo4-like"/>
    <property type="match status" value="1"/>
</dbReference>
<dbReference type="PROSITE" id="PS00535">
    <property type="entry name" value="COMPLEX1_49K"/>
    <property type="match status" value="1"/>
</dbReference>
<keyword id="KW-0150">Chloroplast</keyword>
<keyword id="KW-0472">Membrane</keyword>
<keyword id="KW-0520">NAD</keyword>
<keyword id="KW-0521">NADP</keyword>
<keyword id="KW-0934">Plastid</keyword>
<keyword id="KW-0618">Plastoquinone</keyword>
<keyword id="KW-0874">Quinone</keyword>
<keyword id="KW-0793">Thylakoid</keyword>
<keyword id="KW-1278">Translocase</keyword>
<keyword id="KW-0813">Transport</keyword>